<comment type="similarity">
    <text evidence="3">Belongs to the KTI12 family.</text>
</comment>
<dbReference type="EMBL" id="BC118297">
    <property type="protein sequence ID" value="AAI18298.1"/>
    <property type="molecule type" value="mRNA"/>
</dbReference>
<dbReference type="RefSeq" id="NP_001074206.1">
    <property type="nucleotide sequence ID" value="NM_001080737.1"/>
</dbReference>
<dbReference type="SMR" id="Q148I5"/>
<dbReference type="FunCoup" id="Q148I5">
    <property type="interactions" value="2098"/>
</dbReference>
<dbReference type="GeneID" id="538901"/>
<dbReference type="KEGG" id="bta:538901"/>
<dbReference type="CTD" id="112970"/>
<dbReference type="InParanoid" id="Q148I5"/>
<dbReference type="OrthoDB" id="9972657at2759"/>
<dbReference type="Proteomes" id="UP000009136">
    <property type="component" value="Unplaced"/>
</dbReference>
<dbReference type="GO" id="GO:0005524">
    <property type="term" value="F:ATP binding"/>
    <property type="evidence" value="ECO:0007669"/>
    <property type="project" value="UniProtKB-KW"/>
</dbReference>
<dbReference type="GO" id="GO:0002098">
    <property type="term" value="P:tRNA wobble uridine modification"/>
    <property type="evidence" value="ECO:0000318"/>
    <property type="project" value="GO_Central"/>
</dbReference>
<dbReference type="FunFam" id="3.40.50.300:FF:001981">
    <property type="entry name" value="protein KTI12 homolog"/>
    <property type="match status" value="1"/>
</dbReference>
<dbReference type="Gene3D" id="3.40.50.300">
    <property type="entry name" value="P-loop containing nucleotide triphosphate hydrolases"/>
    <property type="match status" value="2"/>
</dbReference>
<dbReference type="InterPro" id="IPR013641">
    <property type="entry name" value="KTI12/PSTK"/>
</dbReference>
<dbReference type="InterPro" id="IPR027417">
    <property type="entry name" value="P-loop_NTPase"/>
</dbReference>
<dbReference type="PANTHER" id="PTHR12435">
    <property type="match status" value="1"/>
</dbReference>
<dbReference type="Pfam" id="PF08433">
    <property type="entry name" value="KTI12"/>
    <property type="match status" value="1"/>
</dbReference>
<dbReference type="SUPFAM" id="SSF52540">
    <property type="entry name" value="P-loop containing nucleoside triphosphate hydrolases"/>
    <property type="match status" value="1"/>
</dbReference>
<organism>
    <name type="scientific">Bos taurus</name>
    <name type="common">Bovine</name>
    <dbReference type="NCBI Taxonomy" id="9913"/>
    <lineage>
        <taxon>Eukaryota</taxon>
        <taxon>Metazoa</taxon>
        <taxon>Chordata</taxon>
        <taxon>Craniata</taxon>
        <taxon>Vertebrata</taxon>
        <taxon>Euteleostomi</taxon>
        <taxon>Mammalia</taxon>
        <taxon>Eutheria</taxon>
        <taxon>Laurasiatheria</taxon>
        <taxon>Artiodactyla</taxon>
        <taxon>Ruminantia</taxon>
        <taxon>Pecora</taxon>
        <taxon>Bovidae</taxon>
        <taxon>Bovinae</taxon>
        <taxon>Bos</taxon>
    </lineage>
</organism>
<evidence type="ECO:0000250" key="1">
    <source>
        <dbReference type="UniProtKB" id="Q96EK9"/>
    </source>
</evidence>
<evidence type="ECO:0000255" key="2"/>
<evidence type="ECO:0000305" key="3"/>
<feature type="chain" id="PRO_0000285685" description="Protein KTI12 homolog">
    <location>
        <begin position="1"/>
        <end position="354"/>
    </location>
</feature>
<feature type="binding site" evidence="2">
    <location>
        <begin position="8"/>
        <end position="15"/>
    </location>
    <ligand>
        <name>ATP</name>
        <dbReference type="ChEBI" id="CHEBI:30616"/>
    </ligand>
</feature>
<feature type="modified residue" description="Phosphoserine" evidence="1">
    <location>
        <position position="200"/>
    </location>
</feature>
<accession>Q148I5</accession>
<protein>
    <recommendedName>
        <fullName>Protein KTI12 homolog</fullName>
    </recommendedName>
</protein>
<proteinExistence type="evidence at transcript level"/>
<reference key="1">
    <citation type="submission" date="2006-06" db="EMBL/GenBank/DDBJ databases">
        <authorList>
            <consortium name="NIH - Mammalian Gene Collection (MGC) project"/>
        </authorList>
    </citation>
    <scope>NUCLEOTIDE SEQUENCE [LARGE SCALE MRNA]</scope>
    <source>
        <strain>Hereford</strain>
        <tissue>Fetal muscle</tissue>
    </source>
</reference>
<gene>
    <name type="primary">KTI12</name>
</gene>
<name>KTI12_BOVIN</name>
<sequence>MPLVVFCGLPYSGKSRRVEELRAALEAEGRAVQVVDDAAVLGAEDATVYGDSAREKALRGALRAAVERLLSRQDVVILDSLNYIKGFRYELYCLARAARTPICLVYCVRPGSLSGGLRVAGAVDNPNRNVSVSWRPRAEEGGRPLAVGTDVLGEPQAVASLVNRRAQAEVPTESEPKEIRAADLPALVASESEKSAEHASGAFYPPELLEALALRFEAPDSRNRWDRPLFTLVGLEEPLPLAEIRAALFENRAPPPHQSTQSQPLASGSFLHQLDQVTSQVLAGLMEAQKSAVPGDLLKLPGTTEHLRFTRPLTMAELSRLRRQFISYTKMHTNNENLPQLANMFLQYLSQSLH</sequence>
<keyword id="KW-0067">ATP-binding</keyword>
<keyword id="KW-0547">Nucleotide-binding</keyword>
<keyword id="KW-0597">Phosphoprotein</keyword>
<keyword id="KW-1185">Reference proteome</keyword>